<accession>Q5FJH5</accession>
<comment type="function">
    <text evidence="1">Attaches a formyl group to the free amino group of methionyl-tRNA(fMet). The formyl group appears to play a dual role in the initiator identity of N-formylmethionyl-tRNA by promoting its recognition by IF2 and preventing the misappropriation of this tRNA by the elongation apparatus.</text>
</comment>
<comment type="catalytic activity">
    <reaction evidence="1">
        <text>L-methionyl-tRNA(fMet) + (6R)-10-formyltetrahydrofolate = N-formyl-L-methionyl-tRNA(fMet) + (6S)-5,6,7,8-tetrahydrofolate + H(+)</text>
        <dbReference type="Rhea" id="RHEA:24380"/>
        <dbReference type="Rhea" id="RHEA-COMP:9952"/>
        <dbReference type="Rhea" id="RHEA-COMP:9953"/>
        <dbReference type="ChEBI" id="CHEBI:15378"/>
        <dbReference type="ChEBI" id="CHEBI:57453"/>
        <dbReference type="ChEBI" id="CHEBI:78530"/>
        <dbReference type="ChEBI" id="CHEBI:78844"/>
        <dbReference type="ChEBI" id="CHEBI:195366"/>
        <dbReference type="EC" id="2.1.2.9"/>
    </reaction>
</comment>
<comment type="similarity">
    <text evidence="1">Belongs to the Fmt family.</text>
</comment>
<organism>
    <name type="scientific">Lactobacillus acidophilus (strain ATCC 700396 / NCK56 / N2 / NCFM)</name>
    <dbReference type="NCBI Taxonomy" id="272621"/>
    <lineage>
        <taxon>Bacteria</taxon>
        <taxon>Bacillati</taxon>
        <taxon>Bacillota</taxon>
        <taxon>Bacilli</taxon>
        <taxon>Lactobacillales</taxon>
        <taxon>Lactobacillaceae</taxon>
        <taxon>Lactobacillus</taxon>
    </lineage>
</organism>
<proteinExistence type="inferred from homology"/>
<keyword id="KW-0648">Protein biosynthesis</keyword>
<keyword id="KW-1185">Reference proteome</keyword>
<keyword id="KW-0808">Transferase</keyword>
<dbReference type="EC" id="2.1.2.9" evidence="1"/>
<dbReference type="EMBL" id="CP000033">
    <property type="protein sequence ID" value="AAV43149.1"/>
    <property type="molecule type" value="Genomic_DNA"/>
</dbReference>
<dbReference type="RefSeq" id="WP_003547919.1">
    <property type="nucleotide sequence ID" value="NC_006814.3"/>
</dbReference>
<dbReference type="RefSeq" id="YP_194180.1">
    <property type="nucleotide sequence ID" value="NC_006814.3"/>
</dbReference>
<dbReference type="SMR" id="Q5FJH5"/>
<dbReference type="STRING" id="272621.LBA1321"/>
<dbReference type="GeneID" id="93289595"/>
<dbReference type="KEGG" id="lac:LBA1321"/>
<dbReference type="PATRIC" id="fig|272621.13.peg.1250"/>
<dbReference type="eggNOG" id="COG0223">
    <property type="taxonomic scope" value="Bacteria"/>
</dbReference>
<dbReference type="HOGENOM" id="CLU_033347_1_1_9"/>
<dbReference type="OrthoDB" id="9802815at2"/>
<dbReference type="BioCyc" id="LACI272621:G1G49-1299-MONOMER"/>
<dbReference type="Proteomes" id="UP000006381">
    <property type="component" value="Chromosome"/>
</dbReference>
<dbReference type="GO" id="GO:0005829">
    <property type="term" value="C:cytosol"/>
    <property type="evidence" value="ECO:0007669"/>
    <property type="project" value="TreeGrafter"/>
</dbReference>
<dbReference type="GO" id="GO:0004479">
    <property type="term" value="F:methionyl-tRNA formyltransferase activity"/>
    <property type="evidence" value="ECO:0007669"/>
    <property type="project" value="UniProtKB-UniRule"/>
</dbReference>
<dbReference type="CDD" id="cd08646">
    <property type="entry name" value="FMT_core_Met-tRNA-FMT_N"/>
    <property type="match status" value="1"/>
</dbReference>
<dbReference type="CDD" id="cd08704">
    <property type="entry name" value="Met_tRNA_FMT_C"/>
    <property type="match status" value="1"/>
</dbReference>
<dbReference type="FunFam" id="3.40.50.170:FF:000004">
    <property type="entry name" value="Methionyl-tRNA formyltransferase"/>
    <property type="match status" value="1"/>
</dbReference>
<dbReference type="Gene3D" id="3.40.50.12230">
    <property type="match status" value="1"/>
</dbReference>
<dbReference type="HAMAP" id="MF_00182">
    <property type="entry name" value="Formyl_trans"/>
    <property type="match status" value="1"/>
</dbReference>
<dbReference type="InterPro" id="IPR005794">
    <property type="entry name" value="Fmt"/>
</dbReference>
<dbReference type="InterPro" id="IPR005793">
    <property type="entry name" value="Formyl_trans_C"/>
</dbReference>
<dbReference type="InterPro" id="IPR002376">
    <property type="entry name" value="Formyl_transf_N"/>
</dbReference>
<dbReference type="InterPro" id="IPR036477">
    <property type="entry name" value="Formyl_transf_N_sf"/>
</dbReference>
<dbReference type="InterPro" id="IPR011034">
    <property type="entry name" value="Formyl_transferase-like_C_sf"/>
</dbReference>
<dbReference type="InterPro" id="IPR001555">
    <property type="entry name" value="GART_AS"/>
</dbReference>
<dbReference type="InterPro" id="IPR044135">
    <property type="entry name" value="Met-tRNA-FMT_C"/>
</dbReference>
<dbReference type="InterPro" id="IPR041711">
    <property type="entry name" value="Met-tRNA-FMT_N"/>
</dbReference>
<dbReference type="NCBIfam" id="TIGR00460">
    <property type="entry name" value="fmt"/>
    <property type="match status" value="1"/>
</dbReference>
<dbReference type="PANTHER" id="PTHR11138">
    <property type="entry name" value="METHIONYL-TRNA FORMYLTRANSFERASE"/>
    <property type="match status" value="1"/>
</dbReference>
<dbReference type="PANTHER" id="PTHR11138:SF5">
    <property type="entry name" value="METHIONYL-TRNA FORMYLTRANSFERASE, MITOCHONDRIAL"/>
    <property type="match status" value="1"/>
</dbReference>
<dbReference type="Pfam" id="PF02911">
    <property type="entry name" value="Formyl_trans_C"/>
    <property type="match status" value="1"/>
</dbReference>
<dbReference type="Pfam" id="PF00551">
    <property type="entry name" value="Formyl_trans_N"/>
    <property type="match status" value="1"/>
</dbReference>
<dbReference type="SUPFAM" id="SSF50486">
    <property type="entry name" value="FMT C-terminal domain-like"/>
    <property type="match status" value="1"/>
</dbReference>
<dbReference type="SUPFAM" id="SSF53328">
    <property type="entry name" value="Formyltransferase"/>
    <property type="match status" value="1"/>
</dbReference>
<dbReference type="PROSITE" id="PS00373">
    <property type="entry name" value="GART"/>
    <property type="match status" value="1"/>
</dbReference>
<reference key="1">
    <citation type="journal article" date="2005" name="Proc. Natl. Acad. Sci. U.S.A.">
        <title>Complete genome sequence of the probiotic lactic acid bacterium Lactobacillus acidophilus NCFM.</title>
        <authorList>
            <person name="Altermann E."/>
            <person name="Russell W.M."/>
            <person name="Azcarate-Peril M.A."/>
            <person name="Barrangou R."/>
            <person name="Buck B.L."/>
            <person name="McAuliffe O."/>
            <person name="Souther N."/>
            <person name="Dobson A."/>
            <person name="Duong T."/>
            <person name="Callanan M."/>
            <person name="Lick S."/>
            <person name="Hamrick A."/>
            <person name="Cano R."/>
            <person name="Klaenhammer T.R."/>
        </authorList>
    </citation>
    <scope>NUCLEOTIDE SEQUENCE [LARGE SCALE GENOMIC DNA]</scope>
    <source>
        <strain>ATCC 700396 / NCK56 / N2 / NCFM</strain>
    </source>
</reference>
<name>FMT_LACAC</name>
<evidence type="ECO:0000255" key="1">
    <source>
        <dbReference type="HAMAP-Rule" id="MF_00182"/>
    </source>
</evidence>
<feature type="chain" id="PRO_0000082977" description="Methionyl-tRNA formyltransferase">
    <location>
        <begin position="1"/>
        <end position="314"/>
    </location>
</feature>
<feature type="binding site" evidence="1">
    <location>
        <begin position="110"/>
        <end position="113"/>
    </location>
    <ligand>
        <name>(6S)-5,6,7,8-tetrahydrofolate</name>
        <dbReference type="ChEBI" id="CHEBI:57453"/>
    </ligand>
</feature>
<gene>
    <name evidence="1" type="primary">fmt</name>
    <name type="ordered locus">LBA1321</name>
</gene>
<sequence length="314" mass="34245">MTSVIFMGTPEFSVPVLEGLIEAGYEIRAVVTQPDKKVGRKQKIAKTPAKIAAEKHDLPVLQPVKLSGSEEMNQLIDMHADLIVTAAYGQFLPTKFLKSVNIAAVNVHGSLLPKYRGGAPIQYSLINGDKETGITIMEMVKKMDAGDIYAQEAIKIEPEDNAGTLFSKLSILGRDLLLKTLPSIIDGSVKKTPQDPDKVVFSPNITKEQERLSIDMTAEQANNMIRALNPDPGAYLMINGQRFKVWEAEVASDSSSLEAGTVVANKGRFAISFADNTVLNLLEVQPSGKKRMNIKNFLNGQGSKFVTGEEIVDK</sequence>
<protein>
    <recommendedName>
        <fullName evidence="1">Methionyl-tRNA formyltransferase</fullName>
        <ecNumber evidence="1">2.1.2.9</ecNumber>
    </recommendedName>
</protein>